<feature type="chain" id="PRO_0000299112" description="Transcriptional regulatory protein HptR">
    <location>
        <begin position="1"/>
        <end position="252"/>
    </location>
</feature>
<feature type="domain" description="Response regulatory" evidence="2">
    <location>
        <begin position="3"/>
        <end position="118"/>
    </location>
</feature>
<feature type="domain" description="HTH araC/xylS-type" evidence="3">
    <location>
        <begin position="153"/>
        <end position="250"/>
    </location>
</feature>
<feature type="DNA-binding region" description="H-T-H motif" evidence="3">
    <location>
        <begin position="170"/>
        <end position="191"/>
    </location>
</feature>
<feature type="DNA-binding region" description="H-T-H motif" evidence="3">
    <location>
        <begin position="217"/>
        <end position="240"/>
    </location>
</feature>
<feature type="modified residue" description="4-aspartylphosphate" evidence="2">
    <location>
        <position position="55"/>
    </location>
</feature>
<accession>Q99X00</accession>
<evidence type="ECO:0000250" key="1">
    <source>
        <dbReference type="UniProtKB" id="Q2G1E1"/>
    </source>
</evidence>
<evidence type="ECO:0000255" key="2">
    <source>
        <dbReference type="PROSITE-ProRule" id="PRU00169"/>
    </source>
</evidence>
<evidence type="ECO:0000255" key="3">
    <source>
        <dbReference type="PROSITE-ProRule" id="PRU00593"/>
    </source>
</evidence>
<evidence type="ECO:0000305" key="4"/>
<keyword id="KW-0963">Cytoplasm</keyword>
<keyword id="KW-0238">DNA-binding</keyword>
<keyword id="KW-0597">Phosphoprotein</keyword>
<keyword id="KW-0804">Transcription</keyword>
<keyword id="KW-0805">Transcription regulation</keyword>
<keyword id="KW-0902">Two-component regulatory system</keyword>
<proteinExistence type="inferred from homology"/>
<name>HPTR_STAAM</name>
<reference key="1">
    <citation type="journal article" date="2001" name="Lancet">
        <title>Whole genome sequencing of meticillin-resistant Staphylococcus aureus.</title>
        <authorList>
            <person name="Kuroda M."/>
            <person name="Ohta T."/>
            <person name="Uchiyama I."/>
            <person name="Baba T."/>
            <person name="Yuzawa H."/>
            <person name="Kobayashi I."/>
            <person name="Cui L."/>
            <person name="Oguchi A."/>
            <person name="Aoki K."/>
            <person name="Nagai Y."/>
            <person name="Lian J.-Q."/>
            <person name="Ito T."/>
            <person name="Kanamori M."/>
            <person name="Matsumaru H."/>
            <person name="Maruyama A."/>
            <person name="Murakami H."/>
            <person name="Hosoyama A."/>
            <person name="Mizutani-Ui Y."/>
            <person name="Takahashi N.K."/>
            <person name="Sawano T."/>
            <person name="Inoue R."/>
            <person name="Kaito C."/>
            <person name="Sekimizu K."/>
            <person name="Hirakawa H."/>
            <person name="Kuhara S."/>
            <person name="Goto S."/>
            <person name="Yabuzaki J."/>
            <person name="Kanehisa M."/>
            <person name="Yamashita A."/>
            <person name="Oshima K."/>
            <person name="Furuya K."/>
            <person name="Yoshino C."/>
            <person name="Shiba T."/>
            <person name="Hattori M."/>
            <person name="Ogasawara N."/>
            <person name="Hayashi H."/>
            <person name="Hiramatsu K."/>
        </authorList>
    </citation>
    <scope>NUCLEOTIDE SEQUENCE [LARGE SCALE GENOMIC DNA]</scope>
    <source>
        <strain>Mu50 / ATCC 700699</strain>
    </source>
</reference>
<protein>
    <recommendedName>
        <fullName>Transcriptional regulatory protein HptR</fullName>
    </recommendedName>
</protein>
<organism>
    <name type="scientific">Staphylococcus aureus (strain Mu50 / ATCC 700699)</name>
    <dbReference type="NCBI Taxonomy" id="158878"/>
    <lineage>
        <taxon>Bacteria</taxon>
        <taxon>Bacillati</taxon>
        <taxon>Bacillota</taxon>
        <taxon>Bacilli</taxon>
        <taxon>Bacillales</taxon>
        <taxon>Staphylococcaceae</taxon>
        <taxon>Staphylococcus</taxon>
    </lineage>
</organism>
<gene>
    <name type="primary">hptR</name>
    <name type="ordered locus">SAV0223</name>
</gene>
<sequence length="252" mass="29575">MFKVVICDDERIIREGLKQIIPWGDYHFNTIYTAKDGVEALSLIQQHQPELVITDIRMPRKNGVDLLNDIALLDCNVIILSSYDDFEYMKAGIQHHVLDYLLKPVDHAQLEVILGRLVRTLLEQQSQNGRSLASCHDAFQPLLKVEYDDYYVNQIVDQIKQSYQTKVTVSDLIQHIDVSESYAMRTFKDHVGITIVDYLNRYRILQSLQLLDRHYKHYEIADKVGFSEYKMFSYHFKKYLQMSPSDYCKQAK</sequence>
<dbReference type="EMBL" id="BA000017">
    <property type="protein sequence ID" value="BAB56385.1"/>
    <property type="molecule type" value="Genomic_DNA"/>
</dbReference>
<dbReference type="RefSeq" id="WP_000477526.1">
    <property type="nucleotide sequence ID" value="NC_002758.2"/>
</dbReference>
<dbReference type="SMR" id="Q99X00"/>
<dbReference type="KEGG" id="sav:SAV0223"/>
<dbReference type="HOGENOM" id="CLU_000445_5_1_9"/>
<dbReference type="PhylomeDB" id="Q99X00"/>
<dbReference type="Proteomes" id="UP000002481">
    <property type="component" value="Chromosome"/>
</dbReference>
<dbReference type="GO" id="GO:0005737">
    <property type="term" value="C:cytoplasm"/>
    <property type="evidence" value="ECO:0007669"/>
    <property type="project" value="UniProtKB-SubCell"/>
</dbReference>
<dbReference type="GO" id="GO:0003700">
    <property type="term" value="F:DNA-binding transcription factor activity"/>
    <property type="evidence" value="ECO:0007669"/>
    <property type="project" value="InterPro"/>
</dbReference>
<dbReference type="GO" id="GO:0043565">
    <property type="term" value="F:sequence-specific DNA binding"/>
    <property type="evidence" value="ECO:0007669"/>
    <property type="project" value="InterPro"/>
</dbReference>
<dbReference type="GO" id="GO:0000160">
    <property type="term" value="P:phosphorelay signal transduction system"/>
    <property type="evidence" value="ECO:0007669"/>
    <property type="project" value="UniProtKB-KW"/>
</dbReference>
<dbReference type="CDD" id="cd17536">
    <property type="entry name" value="REC_YesN-like"/>
    <property type="match status" value="1"/>
</dbReference>
<dbReference type="Gene3D" id="3.40.50.2300">
    <property type="match status" value="1"/>
</dbReference>
<dbReference type="Gene3D" id="1.10.10.60">
    <property type="entry name" value="Homeodomain-like"/>
    <property type="match status" value="2"/>
</dbReference>
<dbReference type="InterPro" id="IPR011006">
    <property type="entry name" value="CheY-like_superfamily"/>
</dbReference>
<dbReference type="InterPro" id="IPR009057">
    <property type="entry name" value="Homeodomain-like_sf"/>
</dbReference>
<dbReference type="InterPro" id="IPR051552">
    <property type="entry name" value="HptR"/>
</dbReference>
<dbReference type="InterPro" id="IPR018060">
    <property type="entry name" value="HTH_AraC"/>
</dbReference>
<dbReference type="InterPro" id="IPR001789">
    <property type="entry name" value="Sig_transdc_resp-reg_receiver"/>
</dbReference>
<dbReference type="PANTHER" id="PTHR42713">
    <property type="entry name" value="HISTIDINE KINASE-RELATED"/>
    <property type="match status" value="1"/>
</dbReference>
<dbReference type="PANTHER" id="PTHR42713:SF3">
    <property type="entry name" value="TRANSCRIPTIONAL REGULATORY PROTEIN HPTR"/>
    <property type="match status" value="1"/>
</dbReference>
<dbReference type="Pfam" id="PF12833">
    <property type="entry name" value="HTH_18"/>
    <property type="match status" value="1"/>
</dbReference>
<dbReference type="Pfam" id="PF00072">
    <property type="entry name" value="Response_reg"/>
    <property type="match status" value="1"/>
</dbReference>
<dbReference type="SMART" id="SM00342">
    <property type="entry name" value="HTH_ARAC"/>
    <property type="match status" value="1"/>
</dbReference>
<dbReference type="SMART" id="SM00448">
    <property type="entry name" value="REC"/>
    <property type="match status" value="1"/>
</dbReference>
<dbReference type="SUPFAM" id="SSF52172">
    <property type="entry name" value="CheY-like"/>
    <property type="match status" value="1"/>
</dbReference>
<dbReference type="SUPFAM" id="SSF46689">
    <property type="entry name" value="Homeodomain-like"/>
    <property type="match status" value="2"/>
</dbReference>
<dbReference type="PROSITE" id="PS01124">
    <property type="entry name" value="HTH_ARAC_FAMILY_2"/>
    <property type="match status" value="1"/>
</dbReference>
<dbReference type="PROSITE" id="PS50110">
    <property type="entry name" value="RESPONSE_REGULATORY"/>
    <property type="match status" value="1"/>
</dbReference>
<comment type="function">
    <text evidence="1">Member of the two-component regulatory system HptS/HptR that regulates genes involved in hexose phosphate transport system in response to changes in extracellular phosphate sources. Activates uhpT expression to facilitate glucose-6-phosphate/G6P utilization by directly binding to its promoter. Antagonizes CcpA-dependent transcription of a subset of CcpA-regulated genes involved in antibiotic susceptibility.</text>
</comment>
<comment type="subcellular location">
    <subcellularLocation>
        <location evidence="4">Cytoplasm</location>
    </subcellularLocation>
</comment>
<comment type="PTM">
    <text evidence="1">Phosphorylated by HptS.</text>
</comment>